<keyword id="KW-0067">ATP-binding</keyword>
<keyword id="KW-0963">Cytoplasm</keyword>
<keyword id="KW-0418">Kinase</keyword>
<keyword id="KW-0547">Nucleotide-binding</keyword>
<keyword id="KW-0808">Transferase</keyword>
<proteinExistence type="inferred from homology"/>
<gene>
    <name evidence="1" type="primary">adkA</name>
    <name type="ordered locus">M1425_1444</name>
</gene>
<dbReference type="EC" id="2.7.4.3" evidence="1"/>
<dbReference type="EMBL" id="CP001400">
    <property type="protein sequence ID" value="ACP38197.1"/>
    <property type="molecule type" value="Genomic_DNA"/>
</dbReference>
<dbReference type="RefSeq" id="WP_012711442.1">
    <property type="nucleotide sequence ID" value="NC_012588.1"/>
</dbReference>
<dbReference type="SMR" id="C3MVK2"/>
<dbReference type="KEGG" id="sia:M1425_1444"/>
<dbReference type="HOGENOM" id="CLU_119371_0_0_2"/>
<dbReference type="Proteomes" id="UP000001350">
    <property type="component" value="Chromosome"/>
</dbReference>
<dbReference type="GO" id="GO:0005737">
    <property type="term" value="C:cytoplasm"/>
    <property type="evidence" value="ECO:0007669"/>
    <property type="project" value="UniProtKB-SubCell"/>
</dbReference>
<dbReference type="GO" id="GO:0004017">
    <property type="term" value="F:adenylate kinase activity"/>
    <property type="evidence" value="ECO:0007669"/>
    <property type="project" value="UniProtKB-UniRule"/>
</dbReference>
<dbReference type="GO" id="GO:0005524">
    <property type="term" value="F:ATP binding"/>
    <property type="evidence" value="ECO:0007669"/>
    <property type="project" value="UniProtKB-UniRule"/>
</dbReference>
<dbReference type="Gene3D" id="3.40.50.300">
    <property type="entry name" value="P-loop containing nucleotide triphosphate hydrolases"/>
    <property type="match status" value="1"/>
</dbReference>
<dbReference type="HAMAP" id="MF_00234">
    <property type="entry name" value="Adenylate_kinase_AdkA"/>
    <property type="match status" value="1"/>
</dbReference>
<dbReference type="InterPro" id="IPR023477">
    <property type="entry name" value="Adenylate_kinase_AdkA"/>
</dbReference>
<dbReference type="InterPro" id="IPR027417">
    <property type="entry name" value="P-loop_NTPase"/>
</dbReference>
<dbReference type="NCBIfam" id="NF003122">
    <property type="entry name" value="PRK04040.1"/>
    <property type="match status" value="1"/>
</dbReference>
<dbReference type="Pfam" id="PF13207">
    <property type="entry name" value="AAA_17"/>
    <property type="match status" value="1"/>
</dbReference>
<dbReference type="SUPFAM" id="SSF52540">
    <property type="entry name" value="P-loop containing nucleoside triphosphate hydrolases"/>
    <property type="match status" value="1"/>
</dbReference>
<reference key="1">
    <citation type="journal article" date="2009" name="Proc. Natl. Acad. Sci. U.S.A.">
        <title>Biogeography of the Sulfolobus islandicus pan-genome.</title>
        <authorList>
            <person name="Reno M.L."/>
            <person name="Held N.L."/>
            <person name="Fields C.J."/>
            <person name="Burke P.V."/>
            <person name="Whitaker R.J."/>
        </authorList>
    </citation>
    <scope>NUCLEOTIDE SEQUENCE [LARGE SCALE GENOMIC DNA]</scope>
    <source>
        <strain>M.14.25 / Kamchatka #1</strain>
    </source>
</reference>
<accession>C3MVK2</accession>
<comment type="catalytic activity">
    <reaction evidence="1">
        <text>AMP + ATP = 2 ADP</text>
        <dbReference type="Rhea" id="RHEA:12973"/>
        <dbReference type="ChEBI" id="CHEBI:30616"/>
        <dbReference type="ChEBI" id="CHEBI:456215"/>
        <dbReference type="ChEBI" id="CHEBI:456216"/>
        <dbReference type="EC" id="2.7.4.3"/>
    </reaction>
</comment>
<comment type="subcellular location">
    <subcellularLocation>
        <location evidence="1">Cytoplasm</location>
    </subcellularLocation>
</comment>
<comment type="similarity">
    <text evidence="1">Belongs to the archaeal adenylate kinase family.</text>
</comment>
<organism>
    <name type="scientific">Saccharolobus islandicus (strain M.14.25 / Kamchatka #1)</name>
    <name type="common">Sulfolobus islandicus</name>
    <dbReference type="NCBI Taxonomy" id="427317"/>
    <lineage>
        <taxon>Archaea</taxon>
        <taxon>Thermoproteota</taxon>
        <taxon>Thermoprotei</taxon>
        <taxon>Sulfolobales</taxon>
        <taxon>Sulfolobaceae</taxon>
        <taxon>Saccharolobus</taxon>
    </lineage>
</organism>
<sequence length="195" mass="21349">MKIGIVTGIPGVGKTTVLSFADKILTEKGIPHKIANYGDYMLNTALKEGYVNSRDEIRKLQIEKQRELQALAARRIVEDLSLLGDEGIGLIDTHAVIRTPAGYLPGLPRHVIEVLSPKVIFLLEADPRIILERQKRDNSRARADYSDTTVINEVIQFARYSAMASAVLVGASVKVVINQEGDPSIAASDIINSLM</sequence>
<evidence type="ECO:0000255" key="1">
    <source>
        <dbReference type="HAMAP-Rule" id="MF_00234"/>
    </source>
</evidence>
<name>KADA_SACI4</name>
<feature type="chain" id="PRO_1000204393" description="Adenylate kinase">
    <location>
        <begin position="1"/>
        <end position="195"/>
    </location>
</feature>
<feature type="binding site" evidence="1">
    <location>
        <begin position="8"/>
        <end position="16"/>
    </location>
    <ligand>
        <name>ATP</name>
        <dbReference type="ChEBI" id="CHEBI:30616"/>
    </ligand>
</feature>
<protein>
    <recommendedName>
        <fullName evidence="1">Adenylate kinase</fullName>
        <shortName evidence="1">AK</shortName>
        <ecNumber evidence="1">2.7.4.3</ecNumber>
    </recommendedName>
    <alternativeName>
        <fullName evidence="1">ATP-AMP transphosphorylase</fullName>
    </alternativeName>
</protein>